<accession>B8FVH4</accession>
<dbReference type="EC" id="5.3.1.24" evidence="1"/>
<dbReference type="EMBL" id="CP001336">
    <property type="protein sequence ID" value="ACL22376.1"/>
    <property type="molecule type" value="Genomic_DNA"/>
</dbReference>
<dbReference type="RefSeq" id="WP_015945183.1">
    <property type="nucleotide sequence ID" value="NC_011830.1"/>
</dbReference>
<dbReference type="SMR" id="B8FVH4"/>
<dbReference type="KEGG" id="dhd:Dhaf_4371"/>
<dbReference type="HOGENOM" id="CLU_076364_2_0_9"/>
<dbReference type="UniPathway" id="UPA00035">
    <property type="reaction ID" value="UER00042"/>
</dbReference>
<dbReference type="Proteomes" id="UP000007726">
    <property type="component" value="Chromosome"/>
</dbReference>
<dbReference type="GO" id="GO:0004640">
    <property type="term" value="F:phosphoribosylanthranilate isomerase activity"/>
    <property type="evidence" value="ECO:0007669"/>
    <property type="project" value="UniProtKB-UniRule"/>
</dbReference>
<dbReference type="GO" id="GO:0000162">
    <property type="term" value="P:L-tryptophan biosynthetic process"/>
    <property type="evidence" value="ECO:0007669"/>
    <property type="project" value="UniProtKB-UniRule"/>
</dbReference>
<dbReference type="CDD" id="cd00405">
    <property type="entry name" value="PRAI"/>
    <property type="match status" value="1"/>
</dbReference>
<dbReference type="Gene3D" id="3.20.20.70">
    <property type="entry name" value="Aldolase class I"/>
    <property type="match status" value="1"/>
</dbReference>
<dbReference type="HAMAP" id="MF_00135">
    <property type="entry name" value="PRAI"/>
    <property type="match status" value="1"/>
</dbReference>
<dbReference type="InterPro" id="IPR013785">
    <property type="entry name" value="Aldolase_TIM"/>
</dbReference>
<dbReference type="InterPro" id="IPR001240">
    <property type="entry name" value="PRAI_dom"/>
</dbReference>
<dbReference type="InterPro" id="IPR011060">
    <property type="entry name" value="RibuloseP-bd_barrel"/>
</dbReference>
<dbReference type="InterPro" id="IPR044643">
    <property type="entry name" value="TrpF_fam"/>
</dbReference>
<dbReference type="PANTHER" id="PTHR42894">
    <property type="entry name" value="N-(5'-PHOSPHORIBOSYL)ANTHRANILATE ISOMERASE"/>
    <property type="match status" value="1"/>
</dbReference>
<dbReference type="PANTHER" id="PTHR42894:SF1">
    <property type="entry name" value="N-(5'-PHOSPHORIBOSYL)ANTHRANILATE ISOMERASE"/>
    <property type="match status" value="1"/>
</dbReference>
<dbReference type="Pfam" id="PF00697">
    <property type="entry name" value="PRAI"/>
    <property type="match status" value="2"/>
</dbReference>
<dbReference type="SUPFAM" id="SSF51366">
    <property type="entry name" value="Ribulose-phoshate binding barrel"/>
    <property type="match status" value="1"/>
</dbReference>
<keyword id="KW-0028">Amino-acid biosynthesis</keyword>
<keyword id="KW-0057">Aromatic amino acid biosynthesis</keyword>
<keyword id="KW-0413">Isomerase</keyword>
<keyword id="KW-0822">Tryptophan biosynthesis</keyword>
<proteinExistence type="inferred from homology"/>
<organism>
    <name type="scientific">Desulfitobacterium hafniense (strain DSM 10664 / DCB-2)</name>
    <dbReference type="NCBI Taxonomy" id="272564"/>
    <lineage>
        <taxon>Bacteria</taxon>
        <taxon>Bacillati</taxon>
        <taxon>Bacillota</taxon>
        <taxon>Clostridia</taxon>
        <taxon>Eubacteriales</taxon>
        <taxon>Desulfitobacteriaceae</taxon>
        <taxon>Desulfitobacterium</taxon>
    </lineage>
</organism>
<comment type="catalytic activity">
    <reaction evidence="1">
        <text>N-(5-phospho-beta-D-ribosyl)anthranilate = 1-(2-carboxyphenylamino)-1-deoxy-D-ribulose 5-phosphate</text>
        <dbReference type="Rhea" id="RHEA:21540"/>
        <dbReference type="ChEBI" id="CHEBI:18277"/>
        <dbReference type="ChEBI" id="CHEBI:58613"/>
        <dbReference type="EC" id="5.3.1.24"/>
    </reaction>
</comment>
<comment type="pathway">
    <text evidence="1">Amino-acid biosynthesis; L-tryptophan biosynthesis; L-tryptophan from chorismate: step 3/5.</text>
</comment>
<comment type="similarity">
    <text evidence="1">Belongs to the TrpF family.</text>
</comment>
<reference key="1">
    <citation type="journal article" date="2012" name="BMC Microbiol.">
        <title>Genome sequence of Desulfitobacterium hafniense DCB-2, a Gram-positive anaerobe capable of dehalogenation and metal reduction.</title>
        <authorList>
            <person name="Kim S.H."/>
            <person name="Harzman C."/>
            <person name="Davis J.K."/>
            <person name="Hutcheson R."/>
            <person name="Broderick J.B."/>
            <person name="Marsh T.L."/>
            <person name="Tiedje J.M."/>
        </authorList>
    </citation>
    <scope>NUCLEOTIDE SEQUENCE [LARGE SCALE GENOMIC DNA]</scope>
    <source>
        <strain>DSM 10664 / DCB-2</strain>
    </source>
</reference>
<name>TRPF_DESHD</name>
<sequence>MPRIKICGIRTREEARWAAEAGADALGFIFAPHSKRYIQPETAREIILSLPPLISKVGVFAQASPEHVGRIVHECSLDTIQLHGNEDPRLYRHLSVTKIKAFSFPSAPAPGNSSAAAPDFSLVETSPSSSLPTSFRELPPASLHGILLDSSAGGRTGGTGIPLPWHTPEFQDFLHQVGDLGYPLILAGGLNPDNILEAIRLTRPYGVDVSSGVERNGRKDREKIQHFISQARKESPL</sequence>
<gene>
    <name evidence="1" type="primary">trpF</name>
    <name type="ordered locus">Dhaf_4371</name>
</gene>
<feature type="chain" id="PRO_1000197100" description="N-(5'-phosphoribosyl)anthranilate isomerase">
    <location>
        <begin position="1"/>
        <end position="237"/>
    </location>
</feature>
<evidence type="ECO:0000255" key="1">
    <source>
        <dbReference type="HAMAP-Rule" id="MF_00135"/>
    </source>
</evidence>
<protein>
    <recommendedName>
        <fullName evidence="1">N-(5'-phosphoribosyl)anthranilate isomerase</fullName>
        <shortName evidence="1">PRAI</shortName>
        <ecNumber evidence="1">5.3.1.24</ecNumber>
    </recommendedName>
</protein>